<gene>
    <name type="primary">OPG141</name>
    <name type="ORF">MPXVgp128</name>
</gene>
<evidence type="ECO:0000250" key="1">
    <source>
        <dbReference type="UniProtKB" id="Q80HV6"/>
    </source>
</evidence>
<evidence type="ECO:0000255" key="2"/>
<evidence type="ECO:0000305" key="3"/>
<reference key="1">
    <citation type="journal article" date="2022" name="J. Infect. Dis.">
        <title>Exportation of Monkeypox virus from the African continent.</title>
        <authorList>
            <person name="Mauldin M.R."/>
            <person name="McCollum A.M."/>
            <person name="Nakazawa Y.J."/>
            <person name="Mandra A."/>
            <person name="Whitehouse E.R."/>
            <person name="Davidson W."/>
            <person name="Zhao H."/>
            <person name="Gao J."/>
            <person name="Li Y."/>
            <person name="Doty J."/>
            <person name="Yinka-Ogunleye A."/>
            <person name="Akinpelu A."/>
            <person name="Aruna O."/>
            <person name="Naidoo D."/>
            <person name="Lewandowski K."/>
            <person name="Afrough B."/>
            <person name="Graham V."/>
            <person name="Aarons E."/>
            <person name="Hewson R."/>
            <person name="Vipond R."/>
            <person name="Dunning J."/>
            <person name="Chand M."/>
            <person name="Brown C."/>
            <person name="Cohen-Gihon I."/>
            <person name="Erez N."/>
            <person name="Shifman O."/>
            <person name="Israeli O."/>
            <person name="Sharon M."/>
            <person name="Schwartz E."/>
            <person name="Beth-Din A."/>
            <person name="Zvi A."/>
            <person name="Mak T.M."/>
            <person name="Ng Y.K."/>
            <person name="Cui L."/>
            <person name="Lin R.T.P."/>
            <person name="Olson V.A."/>
            <person name="Brooks T."/>
            <person name="Paran N."/>
            <person name="Ihekweazu C."/>
            <person name="Reynolds M.G."/>
        </authorList>
    </citation>
    <scope>NUCLEOTIDE SEQUENCE [LARGE SCALE GENOMIC DNA]</scope>
    <source>
        <strain>MPXV-M5312_HM12_Rivers</strain>
    </source>
</reference>
<name>PG141_MONPV</name>
<comment type="function">
    <text evidence="1">Protein probably involved in counteracting host defense, since it enhances virulence in vivo.</text>
</comment>
<comment type="subcellular location">
    <subcellularLocation>
        <location evidence="1">Virion membrane</location>
        <topology evidence="1">Multi-pass membrane protein</topology>
    </subcellularLocation>
    <text evidence="1">Component of the mature virion (MV) membrane.</text>
</comment>
<comment type="induction">
    <text>Expressed in the late phase of the viral replicative cycle.</text>
</comment>
<comment type="PTM">
    <text evidence="1">Not phosphorylated.</text>
</comment>
<comment type="similarity">
    <text evidence="3">Belongs to the orthopoxvirus OPG141 protein family.</text>
</comment>
<accession>A0A7H0DNB3</accession>
<sequence>MISNYEPLLLLVITCCVLLFNFTISSKTKIDIIFAVQTIVFIWFIFHFVYSAI</sequence>
<proteinExistence type="evidence at transcript level"/>
<organismHost>
    <name type="scientific">Cynomys gunnisoni</name>
    <name type="common">Gunnison's prairie dog</name>
    <name type="synonym">Spermophilus gunnisoni</name>
    <dbReference type="NCBI Taxonomy" id="45479"/>
</organismHost>
<organismHost>
    <name type="scientific">Cynomys leucurus</name>
    <name type="common">White-tailed prairie dog</name>
    <dbReference type="NCBI Taxonomy" id="99825"/>
</organismHost>
<organismHost>
    <name type="scientific">Cynomys ludovicianus</name>
    <name type="common">Black-tailed prairie dog</name>
    <dbReference type="NCBI Taxonomy" id="45480"/>
</organismHost>
<organismHost>
    <name type="scientific">Cynomys mexicanus</name>
    <name type="common">Mexican prairie dog</name>
    <dbReference type="NCBI Taxonomy" id="99826"/>
</organismHost>
<organismHost>
    <name type="scientific">Cynomys parvidens</name>
    <name type="common">Utah prairie dog</name>
    <dbReference type="NCBI Taxonomy" id="99827"/>
</organismHost>
<organismHost>
    <name type="scientific">Gliridae</name>
    <name type="common">dormice</name>
    <dbReference type="NCBI Taxonomy" id="30650"/>
</organismHost>
<organismHost>
    <name type="scientific">Heliosciurus ruwenzorii</name>
    <name type="common">Ruwenzori sun squirrel</name>
    <dbReference type="NCBI Taxonomy" id="226685"/>
</organismHost>
<organismHost>
    <name type="scientific">Homo sapiens</name>
    <name type="common">Human</name>
    <dbReference type="NCBI Taxonomy" id="9606"/>
</organismHost>
<organismHost>
    <name type="scientific">Mus musculus</name>
    <name type="common">Mouse</name>
    <dbReference type="NCBI Taxonomy" id="10090"/>
</organismHost>
<dbReference type="EMBL" id="KC257461">
    <property type="protein sequence ID" value="AGF37030.1"/>
    <property type="molecule type" value="Genomic_DNA"/>
</dbReference>
<dbReference type="EMBL" id="MT903340">
    <property type="protein sequence ID" value="QNP12996.1"/>
    <property type="molecule type" value="Genomic_DNA"/>
</dbReference>
<dbReference type="RefSeq" id="YP_010377123.1">
    <property type="nucleotide sequence ID" value="NC_063383.1"/>
</dbReference>
<dbReference type="RefSeq" id="YP_010466081.1">
    <property type="nucleotide sequence ID" value="NC_003310.1"/>
</dbReference>
<dbReference type="SMR" id="A0A7H0DNB3"/>
<dbReference type="GeneID" id="72551536"/>
<dbReference type="GeneID" id="74814295"/>
<dbReference type="Proteomes" id="UP000516359">
    <property type="component" value="Genome"/>
</dbReference>
<dbReference type="GO" id="GO:0016020">
    <property type="term" value="C:membrane"/>
    <property type="evidence" value="ECO:0007669"/>
    <property type="project" value="UniProtKB-KW"/>
</dbReference>
<dbReference type="GO" id="GO:0055036">
    <property type="term" value="C:virion membrane"/>
    <property type="evidence" value="ECO:0007669"/>
    <property type="project" value="UniProtKB-SubCell"/>
</dbReference>
<dbReference type="GO" id="GO:0005524">
    <property type="term" value="F:ATP binding"/>
    <property type="evidence" value="ECO:0007669"/>
    <property type="project" value="UniProtKB-KW"/>
</dbReference>
<dbReference type="GO" id="GO:0003677">
    <property type="term" value="F:DNA binding"/>
    <property type="evidence" value="ECO:0007669"/>
    <property type="project" value="UniProtKB-KW"/>
</dbReference>
<dbReference type="GO" id="GO:0004386">
    <property type="term" value="F:helicase activity"/>
    <property type="evidence" value="ECO:0007669"/>
    <property type="project" value="UniProtKB-KW"/>
</dbReference>
<dbReference type="GO" id="GO:0016787">
    <property type="term" value="F:hydrolase activity"/>
    <property type="evidence" value="ECO:0007669"/>
    <property type="project" value="UniProtKB-KW"/>
</dbReference>
<dbReference type="GO" id="GO:0006353">
    <property type="term" value="P:DNA-templated transcription termination"/>
    <property type="evidence" value="ECO:0007669"/>
    <property type="project" value="UniProtKB-KW"/>
</dbReference>
<dbReference type="InterPro" id="IPR009372">
    <property type="entry name" value="Poxvirus_A14.5"/>
</dbReference>
<dbReference type="Pfam" id="PF06269">
    <property type="entry name" value="DUF1029"/>
    <property type="match status" value="1"/>
</dbReference>
<protein>
    <recommendedName>
        <fullName>Virion membrane protein OPG141</fullName>
    </recommendedName>
</protein>
<feature type="chain" id="PRO_0000457529" description="Virion membrane protein OPG141">
    <location>
        <begin position="1"/>
        <end position="53"/>
    </location>
</feature>
<feature type="transmembrane region" description="Helical" evidence="2">
    <location>
        <begin position="5"/>
        <end position="25"/>
    </location>
</feature>
<feature type="transmembrane region" description="Helical" evidence="2">
    <location>
        <begin position="30"/>
        <end position="50"/>
    </location>
</feature>
<organism>
    <name type="scientific">Monkeypox virus</name>
    <dbReference type="NCBI Taxonomy" id="10244"/>
    <lineage>
        <taxon>Viruses</taxon>
        <taxon>Varidnaviria</taxon>
        <taxon>Bamfordvirae</taxon>
        <taxon>Nucleocytoviricota</taxon>
        <taxon>Pokkesviricetes</taxon>
        <taxon>Chitovirales</taxon>
        <taxon>Poxviridae</taxon>
        <taxon>Chordopoxvirinae</taxon>
        <taxon>Orthopoxvirus</taxon>
    </lineage>
</organism>
<keyword id="KW-0067">ATP-binding</keyword>
<keyword id="KW-0238">DNA-binding</keyword>
<keyword id="KW-0347">Helicase</keyword>
<keyword id="KW-0378">Hydrolase</keyword>
<keyword id="KW-0426">Late protein</keyword>
<keyword id="KW-0472">Membrane</keyword>
<keyword id="KW-0547">Nucleotide-binding</keyword>
<keyword id="KW-0597">Phosphoprotein</keyword>
<keyword id="KW-1185">Reference proteome</keyword>
<keyword id="KW-0804">Transcription</keyword>
<keyword id="KW-0805">Transcription regulation</keyword>
<keyword id="KW-0806">Transcription termination</keyword>
<keyword id="KW-0812">Transmembrane</keyword>
<keyword id="KW-1133">Transmembrane helix</keyword>
<keyword id="KW-0946">Virion</keyword>